<sequence length="86" mass="9729">MAMHLWLVTLTLVPLLGMDRELMVSAGSLVFPRMPFCEHMAELPNCPQTPNLICGTDGLTYENECHLCLTRMKTMKDIQIMKDGQC</sequence>
<accession>O35679</accession>
<accession>Q149Z4</accession>
<gene>
    <name type="primary">Spink4</name>
    <name type="synonym">Mpgc60</name>
</gene>
<organism>
    <name type="scientific">Mus musculus</name>
    <name type="common">Mouse</name>
    <dbReference type="NCBI Taxonomy" id="10090"/>
    <lineage>
        <taxon>Eukaryota</taxon>
        <taxon>Metazoa</taxon>
        <taxon>Chordata</taxon>
        <taxon>Craniata</taxon>
        <taxon>Vertebrata</taxon>
        <taxon>Euteleostomi</taxon>
        <taxon>Mammalia</taxon>
        <taxon>Eutheria</taxon>
        <taxon>Euarchontoglires</taxon>
        <taxon>Glires</taxon>
        <taxon>Rodentia</taxon>
        <taxon>Myomorpha</taxon>
        <taxon>Muroidea</taxon>
        <taxon>Muridae</taxon>
        <taxon>Murinae</taxon>
        <taxon>Mus</taxon>
        <taxon>Mus</taxon>
    </lineage>
</organism>
<proteinExistence type="evidence at transcript level"/>
<evidence type="ECO:0000250" key="1"/>
<evidence type="ECO:0000255" key="2">
    <source>
        <dbReference type="PROSITE-ProRule" id="PRU00798"/>
    </source>
</evidence>
<evidence type="ECO:0000305" key="3"/>
<dbReference type="EMBL" id="Y11505">
    <property type="protein sequence ID" value="CAA72282.1"/>
    <property type="molecule type" value="mRNA"/>
</dbReference>
<dbReference type="EMBL" id="AL837521">
    <property type="status" value="NOT_ANNOTATED_CDS"/>
    <property type="molecule type" value="Genomic_DNA"/>
</dbReference>
<dbReference type="EMBL" id="CH466538">
    <property type="protein sequence ID" value="EDL05424.1"/>
    <property type="molecule type" value="Genomic_DNA"/>
</dbReference>
<dbReference type="EMBL" id="BC117048">
    <property type="protein sequence ID" value="AAI17049.1"/>
    <property type="molecule type" value="mRNA"/>
</dbReference>
<dbReference type="EMBL" id="BC117050">
    <property type="protein sequence ID" value="AAI17051.1"/>
    <property type="molecule type" value="mRNA"/>
</dbReference>
<dbReference type="CCDS" id="CCDS18052.1"/>
<dbReference type="RefSeq" id="NP_035593.2">
    <property type="nucleotide sequence ID" value="NM_011463.2"/>
</dbReference>
<dbReference type="SMR" id="O35679"/>
<dbReference type="FunCoup" id="O35679">
    <property type="interactions" value="4"/>
</dbReference>
<dbReference type="STRING" id="10090.ENSMUSP00000030122"/>
<dbReference type="MEROPS" id="I01.970"/>
<dbReference type="PaxDb" id="10090-ENSMUSP00000030122"/>
<dbReference type="Antibodypedia" id="1725">
    <property type="antibodies" value="58 antibodies from 12 providers"/>
</dbReference>
<dbReference type="DNASU" id="20731"/>
<dbReference type="Ensembl" id="ENSMUST00000030122.5">
    <property type="protein sequence ID" value="ENSMUSP00000030122.5"/>
    <property type="gene ID" value="ENSMUSG00000028415.5"/>
</dbReference>
<dbReference type="GeneID" id="20731"/>
<dbReference type="KEGG" id="mmu:20731"/>
<dbReference type="UCSC" id="uc008shy.1">
    <property type="organism name" value="mouse"/>
</dbReference>
<dbReference type="AGR" id="MGI:1341848"/>
<dbReference type="CTD" id="27290"/>
<dbReference type="MGI" id="MGI:1341848">
    <property type="gene designation" value="Spink4"/>
</dbReference>
<dbReference type="VEuPathDB" id="HostDB:ENSMUSG00000028415"/>
<dbReference type="eggNOG" id="KOG3649">
    <property type="taxonomic scope" value="Eukaryota"/>
</dbReference>
<dbReference type="GeneTree" id="ENSGT00530000064269"/>
<dbReference type="HOGENOM" id="CLU_169765_2_0_1"/>
<dbReference type="InParanoid" id="O35679"/>
<dbReference type="OMA" id="NECHLCL"/>
<dbReference type="OrthoDB" id="126772at2759"/>
<dbReference type="PhylomeDB" id="O35679"/>
<dbReference type="BioGRID-ORCS" id="20731">
    <property type="hits" value="1 hit in 78 CRISPR screens"/>
</dbReference>
<dbReference type="PRO" id="PR:O35679"/>
<dbReference type="Proteomes" id="UP000000589">
    <property type="component" value="Chromosome 4"/>
</dbReference>
<dbReference type="RNAct" id="O35679">
    <property type="molecule type" value="protein"/>
</dbReference>
<dbReference type="Bgee" id="ENSMUSG00000028415">
    <property type="expression patterns" value="Expressed in crypt of Lieberkuhn of small intestine and 93 other cell types or tissues"/>
</dbReference>
<dbReference type="GO" id="GO:0005576">
    <property type="term" value="C:extracellular region"/>
    <property type="evidence" value="ECO:0007669"/>
    <property type="project" value="UniProtKB-SubCell"/>
</dbReference>
<dbReference type="GO" id="GO:0004867">
    <property type="term" value="F:serine-type endopeptidase inhibitor activity"/>
    <property type="evidence" value="ECO:0007669"/>
    <property type="project" value="UniProtKB-KW"/>
</dbReference>
<dbReference type="GO" id="GO:0009410">
    <property type="term" value="P:response to xenobiotic stimulus"/>
    <property type="evidence" value="ECO:0007669"/>
    <property type="project" value="Ensembl"/>
</dbReference>
<dbReference type="Gene3D" id="3.30.60.30">
    <property type="match status" value="1"/>
</dbReference>
<dbReference type="InterPro" id="IPR002350">
    <property type="entry name" value="Kazal_dom"/>
</dbReference>
<dbReference type="InterPro" id="IPR036058">
    <property type="entry name" value="Kazal_dom_sf"/>
</dbReference>
<dbReference type="InterPro" id="IPR039932">
    <property type="entry name" value="Spink4-like"/>
</dbReference>
<dbReference type="PANTHER" id="PTHR21179:SF0">
    <property type="entry name" value="SERINE PROTEASE INHIBITOR KAZAL-TYPE 4"/>
    <property type="match status" value="1"/>
</dbReference>
<dbReference type="PANTHER" id="PTHR21179">
    <property type="entry name" value="SERINE-TYPE ENDOPEPTIDASE INHIBITOR"/>
    <property type="match status" value="1"/>
</dbReference>
<dbReference type="Pfam" id="PF00050">
    <property type="entry name" value="Kazal_1"/>
    <property type="match status" value="1"/>
</dbReference>
<dbReference type="SMART" id="SM00280">
    <property type="entry name" value="KAZAL"/>
    <property type="match status" value="1"/>
</dbReference>
<dbReference type="SUPFAM" id="SSF100895">
    <property type="entry name" value="Kazal-type serine protease inhibitors"/>
    <property type="match status" value="1"/>
</dbReference>
<dbReference type="PROSITE" id="PS00282">
    <property type="entry name" value="KAZAL_1"/>
    <property type="match status" value="1"/>
</dbReference>
<dbReference type="PROSITE" id="PS51465">
    <property type="entry name" value="KAZAL_2"/>
    <property type="match status" value="1"/>
</dbReference>
<comment type="subcellular location">
    <subcellularLocation>
        <location evidence="1">Secreted</location>
    </subcellularLocation>
</comment>
<comment type="tissue specificity">
    <text>Expressed in the intestinal tract.</text>
</comment>
<name>ISK4_MOUSE</name>
<reference key="1">
    <citation type="journal article" date="1998" name="Differentiation">
        <title>Molecular cloning and characterization of murine Mpgc60, a gene predominantly expressed in the intestinal tract.</title>
        <authorList>
            <person name="Krause R."/>
            <person name="Hemberger M."/>
            <person name="Messerschmid M."/>
            <person name="Mayer W."/>
            <person name="Kothary R."/>
            <person name="Dixkens C."/>
            <person name="Fundele R."/>
        </authorList>
    </citation>
    <scope>NUCLEOTIDE SEQUENCE [MRNA]</scope>
    <source>
        <strain>NMRI</strain>
        <tissue>Intestine</tissue>
    </source>
</reference>
<reference key="2">
    <citation type="journal article" date="2009" name="PLoS Biol.">
        <title>Lineage-specific biology revealed by a finished genome assembly of the mouse.</title>
        <authorList>
            <person name="Church D.M."/>
            <person name="Goodstadt L."/>
            <person name="Hillier L.W."/>
            <person name="Zody M.C."/>
            <person name="Goldstein S."/>
            <person name="She X."/>
            <person name="Bult C.J."/>
            <person name="Agarwala R."/>
            <person name="Cherry J.L."/>
            <person name="DiCuccio M."/>
            <person name="Hlavina W."/>
            <person name="Kapustin Y."/>
            <person name="Meric P."/>
            <person name="Maglott D."/>
            <person name="Birtle Z."/>
            <person name="Marques A.C."/>
            <person name="Graves T."/>
            <person name="Zhou S."/>
            <person name="Teague B."/>
            <person name="Potamousis K."/>
            <person name="Churas C."/>
            <person name="Place M."/>
            <person name="Herschleb J."/>
            <person name="Runnheim R."/>
            <person name="Forrest D."/>
            <person name="Amos-Landgraf J."/>
            <person name="Schwartz D.C."/>
            <person name="Cheng Z."/>
            <person name="Lindblad-Toh K."/>
            <person name="Eichler E.E."/>
            <person name="Ponting C.P."/>
        </authorList>
    </citation>
    <scope>NUCLEOTIDE SEQUENCE [LARGE SCALE GENOMIC DNA]</scope>
    <source>
        <strain>C57BL/6J</strain>
    </source>
</reference>
<reference key="3">
    <citation type="submission" date="2005-07" db="EMBL/GenBank/DDBJ databases">
        <authorList>
            <person name="Mural R.J."/>
            <person name="Adams M.D."/>
            <person name="Myers E.W."/>
            <person name="Smith H.O."/>
            <person name="Venter J.C."/>
        </authorList>
    </citation>
    <scope>NUCLEOTIDE SEQUENCE [LARGE SCALE GENOMIC DNA]</scope>
</reference>
<reference key="4">
    <citation type="journal article" date="2004" name="Genome Res.">
        <title>The status, quality, and expansion of the NIH full-length cDNA project: the Mammalian Gene Collection (MGC).</title>
        <authorList>
            <consortium name="The MGC Project Team"/>
        </authorList>
    </citation>
    <scope>NUCLEOTIDE SEQUENCE [LARGE SCALE MRNA]</scope>
    <source>
        <tissue>Brain</tissue>
    </source>
</reference>
<feature type="signal peptide" evidence="1">
    <location>
        <begin position="1"/>
        <end position="26"/>
    </location>
</feature>
<feature type="chain" id="PRO_0000016570" description="Serine protease inhibitor Kazal-type 4">
    <location>
        <begin position="27"/>
        <end position="86"/>
    </location>
</feature>
<feature type="domain" description="Kazal-like" evidence="2">
    <location>
        <begin position="31"/>
        <end position="86"/>
    </location>
</feature>
<feature type="site" description="Reactive bond" evidence="2">
    <location>
        <begin position="48"/>
        <end position="49"/>
    </location>
</feature>
<feature type="disulfide bond" evidence="2">
    <location>
        <begin position="37"/>
        <end position="68"/>
    </location>
</feature>
<feature type="disulfide bond" evidence="2">
    <location>
        <begin position="46"/>
        <end position="65"/>
    </location>
</feature>
<feature type="disulfide bond" evidence="2">
    <location>
        <begin position="54"/>
        <end position="86"/>
    </location>
</feature>
<feature type="sequence conflict" description="In Ref. 1; CAA72282." evidence="3" ref="1">
    <original>V</original>
    <variation>G</variation>
    <location>
        <position position="13"/>
    </location>
</feature>
<protein>
    <recommendedName>
        <fullName>Serine protease inhibitor Kazal-type 4</fullName>
    </recommendedName>
    <alternativeName>
        <fullName>MPGC60 protein</fullName>
    </alternativeName>
    <alternativeName>
        <fullName>Peptide PEC-60 homolog</fullName>
    </alternativeName>
</protein>
<keyword id="KW-1015">Disulfide bond</keyword>
<keyword id="KW-0646">Protease inhibitor</keyword>
<keyword id="KW-1185">Reference proteome</keyword>
<keyword id="KW-0964">Secreted</keyword>
<keyword id="KW-0722">Serine protease inhibitor</keyword>
<keyword id="KW-0732">Signal</keyword>